<keyword id="KW-1185">Reference proteome</keyword>
<name>YQZO_BACSU</name>
<feature type="chain" id="PRO_0000382212" description="Uncharacterized protein YqzO">
    <location>
        <begin position="1"/>
        <end position="49"/>
    </location>
</feature>
<organism>
    <name type="scientific">Bacillus subtilis (strain 168)</name>
    <dbReference type="NCBI Taxonomy" id="224308"/>
    <lineage>
        <taxon>Bacteria</taxon>
        <taxon>Bacillati</taxon>
        <taxon>Bacillota</taxon>
        <taxon>Bacilli</taxon>
        <taxon>Bacillales</taxon>
        <taxon>Bacillaceae</taxon>
        <taxon>Bacillus</taxon>
    </lineage>
</organism>
<proteinExistence type="predicted"/>
<gene>
    <name type="primary">yqzO</name>
    <name type="ordered locus">BSU26259</name>
</gene>
<protein>
    <recommendedName>
        <fullName>Uncharacterized protein YqzO</fullName>
    </recommendedName>
</protein>
<reference key="1">
    <citation type="journal article" date="1997" name="Nature">
        <title>The complete genome sequence of the Gram-positive bacterium Bacillus subtilis.</title>
        <authorList>
            <person name="Kunst F."/>
            <person name="Ogasawara N."/>
            <person name="Moszer I."/>
            <person name="Albertini A.M."/>
            <person name="Alloni G."/>
            <person name="Azevedo V."/>
            <person name="Bertero M.G."/>
            <person name="Bessieres P."/>
            <person name="Bolotin A."/>
            <person name="Borchert S."/>
            <person name="Borriss R."/>
            <person name="Boursier L."/>
            <person name="Brans A."/>
            <person name="Braun M."/>
            <person name="Brignell S.C."/>
            <person name="Bron S."/>
            <person name="Brouillet S."/>
            <person name="Bruschi C.V."/>
            <person name="Caldwell B."/>
            <person name="Capuano V."/>
            <person name="Carter N.M."/>
            <person name="Choi S.-K."/>
            <person name="Codani J.-J."/>
            <person name="Connerton I.F."/>
            <person name="Cummings N.J."/>
            <person name="Daniel R.A."/>
            <person name="Denizot F."/>
            <person name="Devine K.M."/>
            <person name="Duesterhoeft A."/>
            <person name="Ehrlich S.D."/>
            <person name="Emmerson P.T."/>
            <person name="Entian K.-D."/>
            <person name="Errington J."/>
            <person name="Fabret C."/>
            <person name="Ferrari E."/>
            <person name="Foulger D."/>
            <person name="Fritz C."/>
            <person name="Fujita M."/>
            <person name="Fujita Y."/>
            <person name="Fuma S."/>
            <person name="Galizzi A."/>
            <person name="Galleron N."/>
            <person name="Ghim S.-Y."/>
            <person name="Glaser P."/>
            <person name="Goffeau A."/>
            <person name="Golightly E.J."/>
            <person name="Grandi G."/>
            <person name="Guiseppi G."/>
            <person name="Guy B.J."/>
            <person name="Haga K."/>
            <person name="Haiech J."/>
            <person name="Harwood C.R."/>
            <person name="Henaut A."/>
            <person name="Hilbert H."/>
            <person name="Holsappel S."/>
            <person name="Hosono S."/>
            <person name="Hullo M.-F."/>
            <person name="Itaya M."/>
            <person name="Jones L.-M."/>
            <person name="Joris B."/>
            <person name="Karamata D."/>
            <person name="Kasahara Y."/>
            <person name="Klaerr-Blanchard M."/>
            <person name="Klein C."/>
            <person name="Kobayashi Y."/>
            <person name="Koetter P."/>
            <person name="Koningstein G."/>
            <person name="Krogh S."/>
            <person name="Kumano M."/>
            <person name="Kurita K."/>
            <person name="Lapidus A."/>
            <person name="Lardinois S."/>
            <person name="Lauber J."/>
            <person name="Lazarevic V."/>
            <person name="Lee S.-M."/>
            <person name="Levine A."/>
            <person name="Liu H."/>
            <person name="Masuda S."/>
            <person name="Mauel C."/>
            <person name="Medigue C."/>
            <person name="Medina N."/>
            <person name="Mellado R.P."/>
            <person name="Mizuno M."/>
            <person name="Moestl D."/>
            <person name="Nakai S."/>
            <person name="Noback M."/>
            <person name="Noone D."/>
            <person name="O'Reilly M."/>
            <person name="Ogawa K."/>
            <person name="Ogiwara A."/>
            <person name="Oudega B."/>
            <person name="Park S.-H."/>
            <person name="Parro V."/>
            <person name="Pohl T.M."/>
            <person name="Portetelle D."/>
            <person name="Porwollik S."/>
            <person name="Prescott A.M."/>
            <person name="Presecan E."/>
            <person name="Pujic P."/>
            <person name="Purnelle B."/>
            <person name="Rapoport G."/>
            <person name="Rey M."/>
            <person name="Reynolds S."/>
            <person name="Rieger M."/>
            <person name="Rivolta C."/>
            <person name="Rocha E."/>
            <person name="Roche B."/>
            <person name="Rose M."/>
            <person name="Sadaie Y."/>
            <person name="Sato T."/>
            <person name="Scanlan E."/>
            <person name="Schleich S."/>
            <person name="Schroeter R."/>
            <person name="Scoffone F."/>
            <person name="Sekiguchi J."/>
            <person name="Sekowska A."/>
            <person name="Seror S.J."/>
            <person name="Serror P."/>
            <person name="Shin B.-S."/>
            <person name="Soldo B."/>
            <person name="Sorokin A."/>
            <person name="Tacconi E."/>
            <person name="Takagi T."/>
            <person name="Takahashi H."/>
            <person name="Takemaru K."/>
            <person name="Takeuchi M."/>
            <person name="Tamakoshi A."/>
            <person name="Tanaka T."/>
            <person name="Terpstra P."/>
            <person name="Tognoni A."/>
            <person name="Tosato V."/>
            <person name="Uchiyama S."/>
            <person name="Vandenbol M."/>
            <person name="Vannier F."/>
            <person name="Vassarotti A."/>
            <person name="Viari A."/>
            <person name="Wambutt R."/>
            <person name="Wedler E."/>
            <person name="Wedler H."/>
            <person name="Weitzenegger T."/>
            <person name="Winters P."/>
            <person name="Wipat A."/>
            <person name="Yamamoto H."/>
            <person name="Yamane K."/>
            <person name="Yasumoto K."/>
            <person name="Yata K."/>
            <person name="Yoshida K."/>
            <person name="Yoshikawa H.-F."/>
            <person name="Zumstein E."/>
            <person name="Yoshikawa H."/>
            <person name="Danchin A."/>
        </authorList>
    </citation>
    <scope>NUCLEOTIDE SEQUENCE [LARGE SCALE GENOMIC DNA]</scope>
    <source>
        <strain>168</strain>
    </source>
</reference>
<accession>C0H455</accession>
<dbReference type="EMBL" id="AL009126">
    <property type="protein sequence ID" value="CAX52665.1"/>
    <property type="molecule type" value="Genomic_DNA"/>
</dbReference>
<dbReference type="RefSeq" id="WP_003229910.1">
    <property type="nucleotide sequence ID" value="NZ_OZ025638.1"/>
</dbReference>
<dbReference type="RefSeq" id="YP_003097764.1">
    <property type="nucleotide sequence ID" value="NC_000964.3"/>
</dbReference>
<dbReference type="FunCoup" id="C0H455">
    <property type="interactions" value="1"/>
</dbReference>
<dbReference type="STRING" id="224308.BSU26259"/>
<dbReference type="PaxDb" id="224308-BSU26259"/>
<dbReference type="EnsemblBacteria" id="CAX52665">
    <property type="protein sequence ID" value="CAX52665"/>
    <property type="gene ID" value="BSU_26259"/>
</dbReference>
<dbReference type="GeneID" id="8302984"/>
<dbReference type="KEGG" id="bsu:BSU26259"/>
<dbReference type="PATRIC" id="fig|224308.43.peg.2737"/>
<dbReference type="InParanoid" id="C0H455"/>
<dbReference type="OrthoDB" id="2899228at2"/>
<dbReference type="BioCyc" id="BSUB:BSU26259-MONOMER"/>
<dbReference type="Proteomes" id="UP000001570">
    <property type="component" value="Chromosome"/>
</dbReference>
<sequence length="49" mass="5540">MGMKKKTNIKATGGLYIFGPSNRNEGKDLTPTIRLLEEKIKQMERMLSA</sequence>